<feature type="chain" id="PRO_0000366936" description="LIMR family protein At3g08930">
    <location>
        <begin position="1"/>
        <end position="509"/>
    </location>
</feature>
<feature type="transmembrane region" description="Helical" evidence="1">
    <location>
        <begin position="8"/>
        <end position="28"/>
    </location>
</feature>
<feature type="transmembrane region" description="Helical" evidence="1">
    <location>
        <begin position="44"/>
        <end position="64"/>
    </location>
</feature>
<feature type="transmembrane region" description="Helical" evidence="1">
    <location>
        <begin position="90"/>
        <end position="110"/>
    </location>
</feature>
<feature type="transmembrane region" description="Helical" evidence="1">
    <location>
        <begin position="128"/>
        <end position="148"/>
    </location>
</feature>
<feature type="transmembrane region" description="Helical" evidence="1">
    <location>
        <begin position="208"/>
        <end position="228"/>
    </location>
</feature>
<feature type="transmembrane region" description="Helical" evidence="1">
    <location>
        <begin position="332"/>
        <end position="352"/>
    </location>
</feature>
<feature type="transmembrane region" description="Helical" evidence="1">
    <location>
        <begin position="382"/>
        <end position="402"/>
    </location>
</feature>
<feature type="transmembrane region" description="Helical" evidence="1">
    <location>
        <begin position="422"/>
        <end position="442"/>
    </location>
</feature>
<feature type="transmembrane region" description="Helical" evidence="1">
    <location>
        <begin position="475"/>
        <end position="495"/>
    </location>
</feature>
<feature type="coiled-coil region" evidence="1">
    <location>
        <begin position="251"/>
        <end position="316"/>
    </location>
</feature>
<protein>
    <recommendedName>
        <fullName>LIMR family protein At3g08930</fullName>
    </recommendedName>
</protein>
<keyword id="KW-0175">Coiled coil</keyword>
<keyword id="KW-0472">Membrane</keyword>
<keyword id="KW-1185">Reference proteome</keyword>
<keyword id="KW-0812">Transmembrane</keyword>
<keyword id="KW-1133">Transmembrane helix</keyword>
<evidence type="ECO:0000255" key="1"/>
<evidence type="ECO:0000305" key="2"/>
<proteinExistence type="evidence at transcript level"/>
<comment type="subcellular location">
    <subcellularLocation>
        <location evidence="2">Membrane</location>
        <topology evidence="2">Multi-pass membrane protein</topology>
    </subcellularLocation>
</comment>
<comment type="similarity">
    <text evidence="2">Belongs to the LIMR family.</text>
</comment>
<comment type="sequence caution" evidence="2">
    <conflict type="erroneous gene model prediction">
        <sequence resource="EMBL-CDS" id="AAF07832"/>
    </conflict>
</comment>
<accession>Q9SR93</accession>
<accession>Q3EBA5</accession>
<accession>Q94C82</accession>
<reference key="1">
    <citation type="journal article" date="2000" name="Nature">
        <title>Sequence and analysis of chromosome 3 of the plant Arabidopsis thaliana.</title>
        <authorList>
            <person name="Salanoubat M."/>
            <person name="Lemcke K."/>
            <person name="Rieger M."/>
            <person name="Ansorge W."/>
            <person name="Unseld M."/>
            <person name="Fartmann B."/>
            <person name="Valle G."/>
            <person name="Bloecker H."/>
            <person name="Perez-Alonso M."/>
            <person name="Obermaier B."/>
            <person name="Delseny M."/>
            <person name="Boutry M."/>
            <person name="Grivell L.A."/>
            <person name="Mache R."/>
            <person name="Puigdomenech P."/>
            <person name="De Simone V."/>
            <person name="Choisne N."/>
            <person name="Artiguenave F."/>
            <person name="Robert C."/>
            <person name="Brottier P."/>
            <person name="Wincker P."/>
            <person name="Cattolico L."/>
            <person name="Weissenbach J."/>
            <person name="Saurin W."/>
            <person name="Quetier F."/>
            <person name="Schaefer M."/>
            <person name="Mueller-Auer S."/>
            <person name="Gabel C."/>
            <person name="Fuchs M."/>
            <person name="Benes V."/>
            <person name="Wurmbach E."/>
            <person name="Drzonek H."/>
            <person name="Erfle H."/>
            <person name="Jordan N."/>
            <person name="Bangert S."/>
            <person name="Wiedelmann R."/>
            <person name="Kranz H."/>
            <person name="Voss H."/>
            <person name="Holland R."/>
            <person name="Brandt P."/>
            <person name="Nyakatura G."/>
            <person name="Vezzi A."/>
            <person name="D'Angelo M."/>
            <person name="Pallavicini A."/>
            <person name="Toppo S."/>
            <person name="Simionati B."/>
            <person name="Conrad A."/>
            <person name="Hornischer K."/>
            <person name="Kauer G."/>
            <person name="Loehnert T.-H."/>
            <person name="Nordsiek G."/>
            <person name="Reichelt J."/>
            <person name="Scharfe M."/>
            <person name="Schoen O."/>
            <person name="Bargues M."/>
            <person name="Terol J."/>
            <person name="Climent J."/>
            <person name="Navarro P."/>
            <person name="Collado C."/>
            <person name="Perez-Perez A."/>
            <person name="Ottenwaelder B."/>
            <person name="Duchemin D."/>
            <person name="Cooke R."/>
            <person name="Laudie M."/>
            <person name="Berger-Llauro C."/>
            <person name="Purnelle B."/>
            <person name="Masuy D."/>
            <person name="de Haan M."/>
            <person name="Maarse A.C."/>
            <person name="Alcaraz J.-P."/>
            <person name="Cottet A."/>
            <person name="Casacuberta E."/>
            <person name="Monfort A."/>
            <person name="Argiriou A."/>
            <person name="Flores M."/>
            <person name="Liguori R."/>
            <person name="Vitale D."/>
            <person name="Mannhaupt G."/>
            <person name="Haase D."/>
            <person name="Schoof H."/>
            <person name="Rudd S."/>
            <person name="Zaccaria P."/>
            <person name="Mewes H.-W."/>
            <person name="Mayer K.F.X."/>
            <person name="Kaul S."/>
            <person name="Town C.D."/>
            <person name="Koo H.L."/>
            <person name="Tallon L.J."/>
            <person name="Jenkins J."/>
            <person name="Rooney T."/>
            <person name="Rizzo M."/>
            <person name="Walts A."/>
            <person name="Utterback T."/>
            <person name="Fujii C.Y."/>
            <person name="Shea T.P."/>
            <person name="Creasy T.H."/>
            <person name="Haas B."/>
            <person name="Maiti R."/>
            <person name="Wu D."/>
            <person name="Peterson J."/>
            <person name="Van Aken S."/>
            <person name="Pai G."/>
            <person name="Militscher J."/>
            <person name="Sellers P."/>
            <person name="Gill J.E."/>
            <person name="Feldblyum T.V."/>
            <person name="Preuss D."/>
            <person name="Lin X."/>
            <person name="Nierman W.C."/>
            <person name="Salzberg S.L."/>
            <person name="White O."/>
            <person name="Venter J.C."/>
            <person name="Fraser C.M."/>
            <person name="Kaneko T."/>
            <person name="Nakamura Y."/>
            <person name="Sato S."/>
            <person name="Kato T."/>
            <person name="Asamizu E."/>
            <person name="Sasamoto S."/>
            <person name="Kimura T."/>
            <person name="Idesawa K."/>
            <person name="Kawashima K."/>
            <person name="Kishida Y."/>
            <person name="Kiyokawa C."/>
            <person name="Kohara M."/>
            <person name="Matsumoto M."/>
            <person name="Matsuno A."/>
            <person name="Muraki A."/>
            <person name="Nakayama S."/>
            <person name="Nakazaki N."/>
            <person name="Shinpo S."/>
            <person name="Takeuchi C."/>
            <person name="Wada T."/>
            <person name="Watanabe A."/>
            <person name="Yamada M."/>
            <person name="Yasuda M."/>
            <person name="Tabata S."/>
        </authorList>
    </citation>
    <scope>NUCLEOTIDE SEQUENCE [LARGE SCALE GENOMIC DNA]</scope>
    <source>
        <strain>cv. Columbia</strain>
    </source>
</reference>
<reference key="2">
    <citation type="journal article" date="2017" name="Plant J.">
        <title>Araport11: a complete reannotation of the Arabidopsis thaliana reference genome.</title>
        <authorList>
            <person name="Cheng C.Y."/>
            <person name="Krishnakumar V."/>
            <person name="Chan A.P."/>
            <person name="Thibaud-Nissen F."/>
            <person name="Schobel S."/>
            <person name="Town C.D."/>
        </authorList>
    </citation>
    <scope>GENOME REANNOTATION</scope>
    <source>
        <strain>cv. Columbia</strain>
    </source>
</reference>
<reference key="3">
    <citation type="submission" date="1998-08" db="EMBL/GenBank/DDBJ databases">
        <title>Signal peptide selection derived cDNAs from Arabidopsis thaliana leaves and guard cells.</title>
        <authorList>
            <person name="Stracke R."/>
            <person name="Palme K."/>
        </authorList>
    </citation>
    <scope>NUCLEOTIDE SEQUENCE [LARGE SCALE MRNA]</scope>
</reference>
<reference key="4">
    <citation type="journal article" date="2003" name="Science">
        <title>Empirical analysis of transcriptional activity in the Arabidopsis genome.</title>
        <authorList>
            <person name="Yamada K."/>
            <person name="Lim J."/>
            <person name="Dale J.M."/>
            <person name="Chen H."/>
            <person name="Shinn P."/>
            <person name="Palm C.J."/>
            <person name="Southwick A.M."/>
            <person name="Wu H.C."/>
            <person name="Kim C.J."/>
            <person name="Nguyen M."/>
            <person name="Pham P.K."/>
            <person name="Cheuk R.F."/>
            <person name="Karlin-Newmann G."/>
            <person name="Liu S.X."/>
            <person name="Lam B."/>
            <person name="Sakano H."/>
            <person name="Wu T."/>
            <person name="Yu G."/>
            <person name="Miranda M."/>
            <person name="Quach H.L."/>
            <person name="Tripp M."/>
            <person name="Chang C.H."/>
            <person name="Lee J.M."/>
            <person name="Toriumi M.J."/>
            <person name="Chan M.M."/>
            <person name="Tang C.C."/>
            <person name="Onodera C.S."/>
            <person name="Deng J.M."/>
            <person name="Akiyama K."/>
            <person name="Ansari Y."/>
            <person name="Arakawa T."/>
            <person name="Banh J."/>
            <person name="Banno F."/>
            <person name="Bowser L."/>
            <person name="Brooks S.Y."/>
            <person name="Carninci P."/>
            <person name="Chao Q."/>
            <person name="Choy N."/>
            <person name="Enju A."/>
            <person name="Goldsmith A.D."/>
            <person name="Gurjal M."/>
            <person name="Hansen N.F."/>
            <person name="Hayashizaki Y."/>
            <person name="Johnson-Hopson C."/>
            <person name="Hsuan V.W."/>
            <person name="Iida K."/>
            <person name="Karnes M."/>
            <person name="Khan S."/>
            <person name="Koesema E."/>
            <person name="Ishida J."/>
            <person name="Jiang P.X."/>
            <person name="Jones T."/>
            <person name="Kawai J."/>
            <person name="Kamiya A."/>
            <person name="Meyers C."/>
            <person name="Nakajima M."/>
            <person name="Narusaka M."/>
            <person name="Seki M."/>
            <person name="Sakurai T."/>
            <person name="Satou M."/>
            <person name="Tamse R."/>
            <person name="Vaysberg M."/>
            <person name="Wallender E.K."/>
            <person name="Wong C."/>
            <person name="Yamamura Y."/>
            <person name="Yuan S."/>
            <person name="Shinozaki K."/>
            <person name="Davis R.W."/>
            <person name="Theologis A."/>
            <person name="Ecker J.R."/>
        </authorList>
    </citation>
    <scope>NUCLEOTIDE SEQUENCE [LARGE SCALE MRNA]</scope>
    <source>
        <strain>cv. Columbia</strain>
    </source>
</reference>
<reference key="5">
    <citation type="submission" date="2004-12" db="EMBL/GenBank/DDBJ databases">
        <title>Arabidopsis ORF clones.</title>
        <authorList>
            <person name="Shinn P."/>
            <person name="Chen H."/>
            <person name="Cheuk R.F."/>
            <person name="Kim C.J."/>
            <person name="Ecker J.R."/>
        </authorList>
    </citation>
    <scope>NUCLEOTIDE SEQUENCE [LARGE SCALE MRNA]</scope>
    <source>
        <strain>cv. Columbia</strain>
    </source>
</reference>
<sequence>MGDFNLALVIVAIVVCVIVFISSIYLLVNYQHPDDANQAYFPKFVVVFGLSIAMISILMLPADVANRHACRHAIYNGACNLTLPMKDLWLAIYIVDAILVFFVIPFAMFFYEGDQDKTLGKRIKSALIWVVTTAVVCALVLGILYGVIGKVDFSVRHLASATSTFPTSWQFSNTQPCIGNTARQCSAFTANPTSEKTWTMRTTFPEYVVALATIVGSVLFTIFGGVGIACLPLGLITAFIRRPKAVITRSQYIKEATELGKKARELKKAADGLHQEERSGAKGRKWRKNVKAVEKELLQLEEDVNLLEEMYPQGEQAETAWAFTVLGYLAKFILGIVGLIVSIAWVAHIIIYLLVDPPLSPFLNEVFIKLDDVWGLLGTAAFAFFCFYLLLAVIAGAMMLGLKLVFITIHPMKWGATLMNSFLFNVGLILLCSISVIQFCATAFGYYAQATAAQEIFGHTLQSLRGIKYLYKYNVFQIGFVILAGLTFLYYIAFGWRRKKTSGRFQLSS</sequence>
<organism>
    <name type="scientific">Arabidopsis thaliana</name>
    <name type="common">Mouse-ear cress</name>
    <dbReference type="NCBI Taxonomy" id="3702"/>
    <lineage>
        <taxon>Eukaryota</taxon>
        <taxon>Viridiplantae</taxon>
        <taxon>Streptophyta</taxon>
        <taxon>Embryophyta</taxon>
        <taxon>Tracheophyta</taxon>
        <taxon>Spermatophyta</taxon>
        <taxon>Magnoliopsida</taxon>
        <taxon>eudicotyledons</taxon>
        <taxon>Gunneridae</taxon>
        <taxon>Pentapetalae</taxon>
        <taxon>rosids</taxon>
        <taxon>malvids</taxon>
        <taxon>Brassicales</taxon>
        <taxon>Brassicaceae</taxon>
        <taxon>Camelineae</taxon>
        <taxon>Arabidopsis</taxon>
    </lineage>
</organism>
<gene>
    <name type="ordered locus">At3g08930</name>
    <name type="ORF">T16O11.13</name>
</gene>
<dbReference type="EMBL" id="AC010871">
    <property type="protein sequence ID" value="AAF07832.1"/>
    <property type="status" value="ALT_SEQ"/>
    <property type="molecule type" value="Genomic_DNA"/>
</dbReference>
<dbReference type="EMBL" id="CP002686">
    <property type="protein sequence ID" value="AEE74696.1"/>
    <property type="molecule type" value="Genomic_DNA"/>
</dbReference>
<dbReference type="EMBL" id="AF083733">
    <property type="protein sequence ID" value="AAN60291.1"/>
    <property type="molecule type" value="mRNA"/>
</dbReference>
<dbReference type="EMBL" id="AY035091">
    <property type="protein sequence ID" value="AAK59596.1"/>
    <property type="molecule type" value="mRNA"/>
</dbReference>
<dbReference type="EMBL" id="BT020414">
    <property type="protein sequence ID" value="AAV97805.1"/>
    <property type="molecule type" value="mRNA"/>
</dbReference>
<dbReference type="RefSeq" id="NP_566338.2">
    <property type="nucleotide sequence ID" value="NM_111727.6"/>
</dbReference>
<dbReference type="SMR" id="Q9SR93"/>
<dbReference type="BioGRID" id="5376">
    <property type="interactions" value="68"/>
</dbReference>
<dbReference type="FunCoup" id="Q9SR93">
    <property type="interactions" value="2821"/>
</dbReference>
<dbReference type="IntAct" id="Q9SR93">
    <property type="interactions" value="67"/>
</dbReference>
<dbReference type="STRING" id="3702.Q9SR93"/>
<dbReference type="PaxDb" id="3702-AT3G08930.1"/>
<dbReference type="ProteomicsDB" id="238470"/>
<dbReference type="EnsemblPlants" id="AT3G08930.1">
    <property type="protein sequence ID" value="AT3G08930.1"/>
    <property type="gene ID" value="AT3G08930"/>
</dbReference>
<dbReference type="GeneID" id="820042"/>
<dbReference type="Gramene" id="AT3G08930.1">
    <property type="protein sequence ID" value="AT3G08930.1"/>
    <property type="gene ID" value="AT3G08930"/>
</dbReference>
<dbReference type="KEGG" id="ath:AT3G08930"/>
<dbReference type="Araport" id="AT3G08930"/>
<dbReference type="TAIR" id="AT3G08930"/>
<dbReference type="eggNOG" id="ENOG502QPKQ">
    <property type="taxonomic scope" value="Eukaryota"/>
</dbReference>
<dbReference type="HOGENOM" id="CLU_026480_2_0_1"/>
<dbReference type="InParanoid" id="Q9SR93"/>
<dbReference type="OMA" id="KSAMCWV"/>
<dbReference type="PhylomeDB" id="Q9SR93"/>
<dbReference type="PRO" id="PR:Q9SR93"/>
<dbReference type="Proteomes" id="UP000006548">
    <property type="component" value="Chromosome 3"/>
</dbReference>
<dbReference type="ExpressionAtlas" id="Q9SR93">
    <property type="expression patterns" value="baseline and differential"/>
</dbReference>
<dbReference type="GO" id="GO:0005829">
    <property type="term" value="C:cytosol"/>
    <property type="evidence" value="ECO:0007005"/>
    <property type="project" value="TAIR"/>
</dbReference>
<dbReference type="GO" id="GO:0016020">
    <property type="term" value="C:membrane"/>
    <property type="evidence" value="ECO:0007669"/>
    <property type="project" value="UniProtKB-SubCell"/>
</dbReference>
<dbReference type="GO" id="GO:0009506">
    <property type="term" value="C:plasmodesma"/>
    <property type="evidence" value="ECO:0007005"/>
    <property type="project" value="TAIR"/>
</dbReference>
<dbReference type="InterPro" id="IPR006876">
    <property type="entry name" value="LMBR1-like_membr_prot"/>
</dbReference>
<dbReference type="PANTHER" id="PTHR31652">
    <property type="entry name" value="LIMR FAMILY PROTEIN DDB_G0283707-RELATED"/>
    <property type="match status" value="1"/>
</dbReference>
<dbReference type="PANTHER" id="PTHR31652:SF0">
    <property type="entry name" value="LIMR FAMILY PROTEIN DDB_G0283707-RELATED"/>
    <property type="match status" value="1"/>
</dbReference>
<dbReference type="Pfam" id="PF04791">
    <property type="entry name" value="LMBR1"/>
    <property type="match status" value="2"/>
</dbReference>
<name>LMBD1_ARATH</name>